<accession>Q9DA37</accession>
<sequence>MPAGSRAGSRLRSGSLPRPSRLTLKALRPAYAPRTPDSNGDLDTGSELGPGSPAPTAEEVEKEMAGPSQLCIRRWTTKHVAVWLKDEGFFEYVDILCNKHRLDGITLLTLTEYDLRSPPLEIKVLGDIKRLMLSVRKLQKIHTDVLEEMGYNSDSPMSPMTPFLSALQSADWLCNGEPTHSCDGPIPDLSSDQYQYMNGKNKHSARRLDPEYWKTILSCVYVFIVFGFTSFIMVIVHERVPDMQTYPPLPDIFLDSVPRIPWAFSMTEVCGVILCYIWILVLLLHKHRSILLRRLCSLMGTVFLLRCFTMFVTSLSVPGQHLQCTGKIYGSVWEKLRRAFAIWSGFGMTLTGVHTCGDYMFSGHTVVLTMLNFFVTEYTPRSWNFLHTLSWVLNLFGIFFILAAHEHYSIDVFIAFYITTRLFLYYHTLANTRAYHQSRRARIWFPMFSFFECNVNGTVPNEYCWPFSKPAIMKRLIG</sequence>
<dbReference type="EC" id="2.7.8.-"/>
<dbReference type="EMBL" id="AK006211">
    <property type="protein sequence ID" value="BAB24461.1"/>
    <property type="molecule type" value="mRNA"/>
</dbReference>
<dbReference type="EMBL" id="AK075749">
    <property type="protein sequence ID" value="BAC35929.1"/>
    <property type="molecule type" value="mRNA"/>
</dbReference>
<dbReference type="EMBL" id="AY294423">
    <property type="protein sequence ID" value="AAQ01515.1"/>
    <property type="molecule type" value="Genomic_DNA"/>
</dbReference>
<dbReference type="CCDS" id="CCDS26866.1"/>
<dbReference type="RefSeq" id="NP_080559.1">
    <property type="nucleotide sequence ID" value="NM_026283.3"/>
</dbReference>
<dbReference type="SMR" id="Q9DA37"/>
<dbReference type="BioGRID" id="212321">
    <property type="interactions" value="2"/>
</dbReference>
<dbReference type="FunCoup" id="Q9DA37">
    <property type="interactions" value="1842"/>
</dbReference>
<dbReference type="STRING" id="10090.ENSMUSP00000022292"/>
<dbReference type="iPTMnet" id="Q9DA37"/>
<dbReference type="PhosphoSitePlus" id="Q9DA37"/>
<dbReference type="PaxDb" id="10090-ENSMUSP00000022292"/>
<dbReference type="ProteomicsDB" id="255458"/>
<dbReference type="Antibodypedia" id="29663">
    <property type="antibodies" value="107 antibodies from 22 providers"/>
</dbReference>
<dbReference type="Ensembl" id="ENSMUST00000022292.10">
    <property type="protein sequence ID" value="ENSMUSP00000022292.4"/>
    <property type="gene ID" value="ENSMUSG00000021770.12"/>
</dbReference>
<dbReference type="GeneID" id="67630"/>
<dbReference type="KEGG" id="mmu:67630"/>
<dbReference type="UCSC" id="uc007slp.1">
    <property type="organism name" value="mouse"/>
</dbReference>
<dbReference type="AGR" id="MGI:1914880"/>
<dbReference type="CTD" id="142891"/>
<dbReference type="MGI" id="MGI:1914880">
    <property type="gene designation" value="Samd8"/>
</dbReference>
<dbReference type="VEuPathDB" id="HostDB:ENSMUSG00000021770"/>
<dbReference type="eggNOG" id="KOG3058">
    <property type="taxonomic scope" value="Eukaryota"/>
</dbReference>
<dbReference type="GeneTree" id="ENSGT00940000155540"/>
<dbReference type="InParanoid" id="Q9DA37"/>
<dbReference type="OrthoDB" id="422827at2759"/>
<dbReference type="PhylomeDB" id="Q9DA37"/>
<dbReference type="TreeFam" id="TF314547"/>
<dbReference type="Reactome" id="R-MMU-1660661">
    <property type="pathway name" value="Sphingolipid de novo biosynthesis"/>
</dbReference>
<dbReference type="BioGRID-ORCS" id="67630">
    <property type="hits" value="3 hits in 63 CRISPR screens"/>
</dbReference>
<dbReference type="ChiTaRS" id="Samd8">
    <property type="organism name" value="mouse"/>
</dbReference>
<dbReference type="PRO" id="PR:Q9DA37"/>
<dbReference type="Proteomes" id="UP000000589">
    <property type="component" value="Chromosome 14"/>
</dbReference>
<dbReference type="RNAct" id="Q9DA37">
    <property type="molecule type" value="protein"/>
</dbReference>
<dbReference type="Bgee" id="ENSMUSG00000021770">
    <property type="expression patterns" value="Expressed in mucous cell of stomach and 241 other cell types or tissues"/>
</dbReference>
<dbReference type="ExpressionAtlas" id="Q9DA37">
    <property type="expression patterns" value="baseline and differential"/>
</dbReference>
<dbReference type="GO" id="GO:0005789">
    <property type="term" value="C:endoplasmic reticulum membrane"/>
    <property type="evidence" value="ECO:0000250"/>
    <property type="project" value="UniProtKB"/>
</dbReference>
<dbReference type="GO" id="GO:0016020">
    <property type="term" value="C:membrane"/>
    <property type="evidence" value="ECO:0000303"/>
    <property type="project" value="UniProtKB"/>
</dbReference>
<dbReference type="GO" id="GO:0002950">
    <property type="term" value="F:ceramide phosphoethanolamine synthase activity"/>
    <property type="evidence" value="ECO:0000314"/>
    <property type="project" value="MGI"/>
</dbReference>
<dbReference type="GO" id="GO:0046513">
    <property type="term" value="P:ceramide biosynthetic process"/>
    <property type="evidence" value="ECO:0000314"/>
    <property type="project" value="MGI"/>
</dbReference>
<dbReference type="GO" id="GO:1905373">
    <property type="term" value="P:ceramide phosphoethanolamine biosynthetic process"/>
    <property type="evidence" value="ECO:0000314"/>
    <property type="project" value="MGI"/>
</dbReference>
<dbReference type="GO" id="GO:2000303">
    <property type="term" value="P:regulation of ceramide biosynthetic process"/>
    <property type="evidence" value="ECO:0000250"/>
    <property type="project" value="UniProtKB"/>
</dbReference>
<dbReference type="GO" id="GO:0006686">
    <property type="term" value="P:sphingomyelin biosynthetic process"/>
    <property type="evidence" value="ECO:0000303"/>
    <property type="project" value="UniProtKB"/>
</dbReference>
<dbReference type="CDD" id="cd09515">
    <property type="entry name" value="SAM_SGMS1-like"/>
    <property type="match status" value="1"/>
</dbReference>
<dbReference type="FunFam" id="1.10.150.50:FF:000037">
    <property type="entry name" value="sphingomyelin synthase-related protein 1 isoform X1"/>
    <property type="match status" value="1"/>
</dbReference>
<dbReference type="Gene3D" id="1.10.150.50">
    <property type="entry name" value="Transcription Factor, Ets-1"/>
    <property type="match status" value="1"/>
</dbReference>
<dbReference type="InterPro" id="IPR001660">
    <property type="entry name" value="SAM"/>
</dbReference>
<dbReference type="InterPro" id="IPR013761">
    <property type="entry name" value="SAM/pointed_sf"/>
</dbReference>
<dbReference type="InterPro" id="IPR045221">
    <property type="entry name" value="Sphingomyelin_synth-like"/>
</dbReference>
<dbReference type="InterPro" id="IPR025749">
    <property type="entry name" value="Sphingomyelin_synth-like_dom"/>
</dbReference>
<dbReference type="PANTHER" id="PTHR21290:SF25">
    <property type="entry name" value="SPHINGOMYELIN SYNTHASE-RELATED PROTEIN 1"/>
    <property type="match status" value="1"/>
</dbReference>
<dbReference type="PANTHER" id="PTHR21290">
    <property type="entry name" value="SPHINGOMYELIN SYNTHETASE"/>
    <property type="match status" value="1"/>
</dbReference>
<dbReference type="Pfam" id="PF14360">
    <property type="entry name" value="PAP2_C"/>
    <property type="match status" value="1"/>
</dbReference>
<dbReference type="Pfam" id="PF00536">
    <property type="entry name" value="SAM_1"/>
    <property type="match status" value="1"/>
</dbReference>
<dbReference type="SMART" id="SM00454">
    <property type="entry name" value="SAM"/>
    <property type="match status" value="1"/>
</dbReference>
<dbReference type="SUPFAM" id="SSF47769">
    <property type="entry name" value="SAM/Pointed domain"/>
    <property type="match status" value="1"/>
</dbReference>
<dbReference type="PROSITE" id="PS50105">
    <property type="entry name" value="SAM_DOMAIN"/>
    <property type="match status" value="1"/>
</dbReference>
<keyword id="KW-0256">Endoplasmic reticulum</keyword>
<keyword id="KW-0443">Lipid metabolism</keyword>
<keyword id="KW-0472">Membrane</keyword>
<keyword id="KW-1185">Reference proteome</keyword>
<keyword id="KW-0746">Sphingolipid metabolism</keyword>
<keyword id="KW-0808">Transferase</keyword>
<keyword id="KW-0812">Transmembrane</keyword>
<keyword id="KW-1133">Transmembrane helix</keyword>
<protein>
    <recommendedName>
        <fullName evidence="7">Sphingomyelin synthase-related protein 1</fullName>
        <shortName>SMSr</shortName>
        <ecNumber>2.7.8.-</ecNumber>
    </recommendedName>
    <alternativeName>
        <fullName>Ceramide phosphoethanolamine synthase</fullName>
        <shortName>CPE synthase</shortName>
    </alternativeName>
    <alternativeName>
        <fullName>Sterile alpha motif domain-containing protein 8</fullName>
        <shortName>SAM domain-containing protein 8</shortName>
    </alternativeName>
</protein>
<evidence type="ECO:0000250" key="1"/>
<evidence type="ECO:0000250" key="2">
    <source>
        <dbReference type="UniProtKB" id="Q96LT4"/>
    </source>
</evidence>
<evidence type="ECO:0000255" key="3"/>
<evidence type="ECO:0000255" key="4">
    <source>
        <dbReference type="PROSITE-ProRule" id="PRU00184"/>
    </source>
</evidence>
<evidence type="ECO:0000256" key="5">
    <source>
        <dbReference type="SAM" id="MobiDB-lite"/>
    </source>
</evidence>
<evidence type="ECO:0000269" key="6">
    <source>
    </source>
</evidence>
<evidence type="ECO:0000305" key="7"/>
<evidence type="ECO:0000312" key="8">
    <source>
        <dbReference type="EMBL" id="AAQ01515.1"/>
    </source>
</evidence>
<evidence type="ECO:0000312" key="9">
    <source>
        <dbReference type="EMBL" id="BAB24461.1"/>
    </source>
</evidence>
<evidence type="ECO:0000312" key="10">
    <source>
        <dbReference type="MGI" id="MGI:1914880"/>
    </source>
</evidence>
<reference key="1">
    <citation type="journal article" date="2005" name="Science">
        <title>The transcriptional landscape of the mammalian genome.</title>
        <authorList>
            <person name="Carninci P."/>
            <person name="Kasukawa T."/>
            <person name="Katayama S."/>
            <person name="Gough J."/>
            <person name="Frith M.C."/>
            <person name="Maeda N."/>
            <person name="Oyama R."/>
            <person name="Ravasi T."/>
            <person name="Lenhard B."/>
            <person name="Wells C."/>
            <person name="Kodzius R."/>
            <person name="Shimokawa K."/>
            <person name="Bajic V.B."/>
            <person name="Brenner S.E."/>
            <person name="Batalov S."/>
            <person name="Forrest A.R."/>
            <person name="Zavolan M."/>
            <person name="Davis M.J."/>
            <person name="Wilming L.G."/>
            <person name="Aidinis V."/>
            <person name="Allen J.E."/>
            <person name="Ambesi-Impiombato A."/>
            <person name="Apweiler R."/>
            <person name="Aturaliya R.N."/>
            <person name="Bailey T.L."/>
            <person name="Bansal M."/>
            <person name="Baxter L."/>
            <person name="Beisel K.W."/>
            <person name="Bersano T."/>
            <person name="Bono H."/>
            <person name="Chalk A.M."/>
            <person name="Chiu K.P."/>
            <person name="Choudhary V."/>
            <person name="Christoffels A."/>
            <person name="Clutterbuck D.R."/>
            <person name="Crowe M.L."/>
            <person name="Dalla E."/>
            <person name="Dalrymple B.P."/>
            <person name="de Bono B."/>
            <person name="Della Gatta G."/>
            <person name="di Bernardo D."/>
            <person name="Down T."/>
            <person name="Engstrom P."/>
            <person name="Fagiolini M."/>
            <person name="Faulkner G."/>
            <person name="Fletcher C.F."/>
            <person name="Fukushima T."/>
            <person name="Furuno M."/>
            <person name="Futaki S."/>
            <person name="Gariboldi M."/>
            <person name="Georgii-Hemming P."/>
            <person name="Gingeras T.R."/>
            <person name="Gojobori T."/>
            <person name="Green R.E."/>
            <person name="Gustincich S."/>
            <person name="Harbers M."/>
            <person name="Hayashi Y."/>
            <person name="Hensch T.K."/>
            <person name="Hirokawa N."/>
            <person name="Hill D."/>
            <person name="Huminiecki L."/>
            <person name="Iacono M."/>
            <person name="Ikeo K."/>
            <person name="Iwama A."/>
            <person name="Ishikawa T."/>
            <person name="Jakt M."/>
            <person name="Kanapin A."/>
            <person name="Katoh M."/>
            <person name="Kawasawa Y."/>
            <person name="Kelso J."/>
            <person name="Kitamura H."/>
            <person name="Kitano H."/>
            <person name="Kollias G."/>
            <person name="Krishnan S.P."/>
            <person name="Kruger A."/>
            <person name="Kummerfeld S.K."/>
            <person name="Kurochkin I.V."/>
            <person name="Lareau L.F."/>
            <person name="Lazarevic D."/>
            <person name="Lipovich L."/>
            <person name="Liu J."/>
            <person name="Liuni S."/>
            <person name="McWilliam S."/>
            <person name="Madan Babu M."/>
            <person name="Madera M."/>
            <person name="Marchionni L."/>
            <person name="Matsuda H."/>
            <person name="Matsuzawa S."/>
            <person name="Miki H."/>
            <person name="Mignone F."/>
            <person name="Miyake S."/>
            <person name="Morris K."/>
            <person name="Mottagui-Tabar S."/>
            <person name="Mulder N."/>
            <person name="Nakano N."/>
            <person name="Nakauchi H."/>
            <person name="Ng P."/>
            <person name="Nilsson R."/>
            <person name="Nishiguchi S."/>
            <person name="Nishikawa S."/>
            <person name="Nori F."/>
            <person name="Ohara O."/>
            <person name="Okazaki Y."/>
            <person name="Orlando V."/>
            <person name="Pang K.C."/>
            <person name="Pavan W.J."/>
            <person name="Pavesi G."/>
            <person name="Pesole G."/>
            <person name="Petrovsky N."/>
            <person name="Piazza S."/>
            <person name="Reed J."/>
            <person name="Reid J.F."/>
            <person name="Ring B.Z."/>
            <person name="Ringwald M."/>
            <person name="Rost B."/>
            <person name="Ruan Y."/>
            <person name="Salzberg S.L."/>
            <person name="Sandelin A."/>
            <person name="Schneider C."/>
            <person name="Schoenbach C."/>
            <person name="Sekiguchi K."/>
            <person name="Semple C.A."/>
            <person name="Seno S."/>
            <person name="Sessa L."/>
            <person name="Sheng Y."/>
            <person name="Shibata Y."/>
            <person name="Shimada H."/>
            <person name="Shimada K."/>
            <person name="Silva D."/>
            <person name="Sinclair B."/>
            <person name="Sperling S."/>
            <person name="Stupka E."/>
            <person name="Sugiura K."/>
            <person name="Sultana R."/>
            <person name="Takenaka Y."/>
            <person name="Taki K."/>
            <person name="Tammoja K."/>
            <person name="Tan S.L."/>
            <person name="Tang S."/>
            <person name="Taylor M.S."/>
            <person name="Tegner J."/>
            <person name="Teichmann S.A."/>
            <person name="Ueda H.R."/>
            <person name="van Nimwegen E."/>
            <person name="Verardo R."/>
            <person name="Wei C.L."/>
            <person name="Yagi K."/>
            <person name="Yamanishi H."/>
            <person name="Zabarovsky E."/>
            <person name="Zhu S."/>
            <person name="Zimmer A."/>
            <person name="Hide W."/>
            <person name="Bult C."/>
            <person name="Grimmond S.M."/>
            <person name="Teasdale R.D."/>
            <person name="Liu E.T."/>
            <person name="Brusic V."/>
            <person name="Quackenbush J."/>
            <person name="Wahlestedt C."/>
            <person name="Mattick J.S."/>
            <person name="Hume D.A."/>
            <person name="Kai C."/>
            <person name="Sasaki D."/>
            <person name="Tomaru Y."/>
            <person name="Fukuda S."/>
            <person name="Kanamori-Katayama M."/>
            <person name="Suzuki M."/>
            <person name="Aoki J."/>
            <person name="Arakawa T."/>
            <person name="Iida J."/>
            <person name="Imamura K."/>
            <person name="Itoh M."/>
            <person name="Kato T."/>
            <person name="Kawaji H."/>
            <person name="Kawagashira N."/>
            <person name="Kawashima T."/>
            <person name="Kojima M."/>
            <person name="Kondo S."/>
            <person name="Konno H."/>
            <person name="Nakano K."/>
            <person name="Ninomiya N."/>
            <person name="Nishio T."/>
            <person name="Okada M."/>
            <person name="Plessy C."/>
            <person name="Shibata K."/>
            <person name="Shiraki T."/>
            <person name="Suzuki S."/>
            <person name="Tagami M."/>
            <person name="Waki K."/>
            <person name="Watahiki A."/>
            <person name="Okamura-Oho Y."/>
            <person name="Suzuki H."/>
            <person name="Kawai J."/>
            <person name="Hayashizaki Y."/>
        </authorList>
    </citation>
    <scope>NUCLEOTIDE SEQUENCE [LARGE SCALE MRNA]</scope>
    <source>
        <strain>C57BL/6J</strain>
        <tissue>Testis</tissue>
    </source>
</reference>
<reference evidence="8" key="2">
    <citation type="submission" date="2003-05" db="EMBL/GenBank/DDBJ databases">
        <title>Genomic sequence analysis in the mouse T-complex region.</title>
        <authorList>
            <person name="Brathwaite M.E."/>
            <person name="Waeltz P."/>
            <person name="Qian Y."/>
            <person name="Dudekula D."/>
            <person name="Schlessinger D."/>
            <person name="Nagaraja R."/>
        </authorList>
    </citation>
    <scope>NUCLEOTIDE SEQUENCE [LARGE SCALE GENOMIC DNA]</scope>
    <source>
        <strain>C57BL/6J</strain>
    </source>
</reference>
<reference evidence="7" key="3">
    <citation type="journal article" date="2004" name="EMBO J.">
        <title>Identification of a family of animal sphingomyelin synthases.</title>
        <authorList>
            <person name="Huitema K."/>
            <person name="Van Den Dikkenberg J."/>
            <person name="Brouwers J.F.H.M."/>
            <person name="Holthuis J.C."/>
        </authorList>
    </citation>
    <scope>IDENTIFICATION</scope>
</reference>
<reference key="4">
    <citation type="journal article" date="2015" name="J. Lipid Res.">
        <title>All members in the sphingomyelin synthase gene family have ceramide phosphoethanolamine synthase activity.</title>
        <authorList>
            <person name="Ding T."/>
            <person name="Kabir I."/>
            <person name="Li Y."/>
            <person name="Lou C."/>
            <person name="Yazdanyar A."/>
            <person name="Xu J."/>
            <person name="Dong J."/>
            <person name="Zhou H."/>
            <person name="Park T."/>
            <person name="Boutjdir M."/>
            <person name="Li Z."/>
            <person name="Jiang X.C."/>
        </authorList>
    </citation>
    <scope>FUNCTION</scope>
    <scope>CATALYTIC ACTIVITY</scope>
    <scope>TISSUE SPECIFICITY</scope>
</reference>
<gene>
    <name evidence="10" type="primary">Samd8</name>
</gene>
<comment type="function">
    <text evidence="2 6">Synthesizes sphingolipids through transfer of a phosphatidyl head group from a glycerophospholipid on to the primary hydroxyl of a ceramide in the lumen of the endoplasmic reticulum (PubMed:25605874). Catalyzes the synthesis of ceramide phosphoethanolamines (CPEs) (such as N-acylsphing-4-enine 1-phosphoethanolamine) by transferring phosphoethanolamine head group, which is smaller and more hydrophilic than the phosphocholine (PC) headgroup transferred in the canonical sphingomyelin synthesis (SMS) reaction by SMS1 or SMS2, from a phosphatidylethanolamine (1,2-diacyl-sn-glycero-3-phosphoethanolamine, PE) to a ceramide (such as N-acylsphing-4-enine) (PubMed:25605874). The larger PC prevents an efficient fit in the enzyme's catalytic pocket, leading to little or no SMS activity (PubMed:25605874). In vitro, in the absence of ceramide, it has PLC activity with preference for phosphatidylinositol and phosphatidic acid, but also hydrolyzes phosphatidylethanolamine (By similarity).</text>
</comment>
<comment type="catalytic activity">
    <reaction evidence="6">
        <text>an N-acylsphing-4-enine + a 1,2-diacyl-sn-glycero-3-phosphoethanolamine = an N-acylsphing-4-enine 1-phosphoethanolamine + a 1,2-diacyl-sn-glycerol</text>
        <dbReference type="Rhea" id="RHEA:36079"/>
        <dbReference type="ChEBI" id="CHEBI:17815"/>
        <dbReference type="ChEBI" id="CHEBI:52639"/>
        <dbReference type="ChEBI" id="CHEBI:64612"/>
        <dbReference type="ChEBI" id="CHEBI:73203"/>
    </reaction>
    <physiologicalReaction direction="left-to-right" evidence="6">
        <dbReference type="Rhea" id="RHEA:36080"/>
    </physiologicalReaction>
</comment>
<comment type="catalytic activity">
    <reaction evidence="2">
        <text>an N-acylsphinganine + a 1,2-diacyl-sn-glycero-3-phosphoethanolamine = an N-acylsphinganine-1-phosphoethanolamine + a 1,2-diacyl-sn-glycerol</text>
        <dbReference type="Rhea" id="RHEA:42136"/>
        <dbReference type="ChEBI" id="CHEBI:17815"/>
        <dbReference type="ChEBI" id="CHEBI:31488"/>
        <dbReference type="ChEBI" id="CHEBI:64612"/>
        <dbReference type="ChEBI" id="CHEBI:78655"/>
    </reaction>
    <physiologicalReaction direction="left-to-right" evidence="2">
        <dbReference type="Rhea" id="RHEA:42137"/>
    </physiologicalReaction>
</comment>
<comment type="catalytic activity">
    <reaction evidence="2">
        <text>an N-acyl-(4R)-4-hydroxysphinganine + a 1,2-diacyl-sn-glycero-3-phosphoethanolamine = an N-acyl-(4R)-4-hydroxysphinganine-1-phosphoethanolamine + a 1,2-diacyl-sn-glycerol</text>
        <dbReference type="Rhea" id="RHEA:42148"/>
        <dbReference type="ChEBI" id="CHEBI:17815"/>
        <dbReference type="ChEBI" id="CHEBI:31998"/>
        <dbReference type="ChEBI" id="CHEBI:64612"/>
        <dbReference type="ChEBI" id="CHEBI:78657"/>
    </reaction>
    <physiologicalReaction direction="left-to-right" evidence="2">
        <dbReference type="Rhea" id="RHEA:42149"/>
    </physiologicalReaction>
</comment>
<comment type="catalytic activity">
    <reaction evidence="2">
        <text>N-hexadecanoylsphinganine + a 1,2-diacyl-sn-glycero-3-phosphoethanolamine = N-hexadecanoyl-sphinganine-1-phosphoethanolamine + a 1,2-diacyl-sn-glycerol</text>
        <dbReference type="Rhea" id="RHEA:42128"/>
        <dbReference type="ChEBI" id="CHEBI:17815"/>
        <dbReference type="ChEBI" id="CHEBI:64612"/>
        <dbReference type="ChEBI" id="CHEBI:67042"/>
        <dbReference type="ChEBI" id="CHEBI:78654"/>
    </reaction>
    <physiologicalReaction direction="left-to-right" evidence="2">
        <dbReference type="Rhea" id="RHEA:42129"/>
    </physiologicalReaction>
</comment>
<comment type="catalytic activity">
    <reaction evidence="2">
        <text>N-hexadecanoyl-(4R)-hydroxysphinganine + a 1,2-diacyl-sn-glycero-3-phosphoethanolamine = N-hexadecanoyl-(4R)-hydroxysphinganine-1-phosphoethanolamine + a 1,2-diacyl-sn-glycerol</text>
        <dbReference type="Rhea" id="RHEA:42144"/>
        <dbReference type="ChEBI" id="CHEBI:17815"/>
        <dbReference type="ChEBI" id="CHEBI:64612"/>
        <dbReference type="ChEBI" id="CHEBI:65107"/>
        <dbReference type="ChEBI" id="CHEBI:78656"/>
    </reaction>
    <physiologicalReaction direction="left-to-right" evidence="2">
        <dbReference type="Rhea" id="RHEA:42145"/>
    </physiologicalReaction>
</comment>
<comment type="pathway">
    <text evidence="7">Sphingolipid metabolism.</text>
</comment>
<comment type="subcellular location">
    <subcellularLocation>
        <location evidence="1">Endoplasmic reticulum membrane</location>
        <topology evidence="1">Multi-pass membrane protein</topology>
    </subcellularLocation>
</comment>
<comment type="tissue specificity">
    <text evidence="6">Expressed ubiquitously with highest levels in macrophages and testis.</text>
</comment>
<comment type="domain">
    <text evidence="1">The SAM domain is required to retain SMAD8 in the endoplasmic reticulum. membrane protein (By similarity).</text>
</comment>
<comment type="similarity">
    <text evidence="7">Belongs to the sphingomyelin synthase family.</text>
</comment>
<comment type="caution">
    <text evidence="7">It is uncertain whether Met-1 or Met-64 is the initiator.</text>
</comment>
<proteinExistence type="evidence at protein level"/>
<name>SAMD8_MOUSE</name>
<feature type="chain" id="PRO_0000221081" description="Sphingomyelin synthase-related protein 1">
    <location>
        <begin position="1"/>
        <end position="478"/>
    </location>
</feature>
<feature type="transmembrane region" description="Helical" evidence="3">
    <location>
        <begin position="216"/>
        <end position="236"/>
    </location>
</feature>
<feature type="transmembrane region" description="Helical" evidence="3">
    <location>
        <begin position="264"/>
        <end position="284"/>
    </location>
</feature>
<feature type="transmembrane region" description="Helical" evidence="3">
    <location>
        <begin position="295"/>
        <end position="315"/>
    </location>
</feature>
<feature type="transmembrane region" description="Helical" evidence="3">
    <location>
        <begin position="341"/>
        <end position="361"/>
    </location>
</feature>
<feature type="transmembrane region" description="Helical" evidence="3">
    <location>
        <begin position="385"/>
        <end position="405"/>
    </location>
</feature>
<feature type="transmembrane region" description="Helical" evidence="3">
    <location>
        <begin position="410"/>
        <end position="430"/>
    </location>
</feature>
<feature type="topological domain" description="Cytoplasmic" evidence="3">
    <location>
        <begin position="431"/>
        <end position="478"/>
    </location>
</feature>
<feature type="domain" description="SAM" evidence="4">
    <location>
        <begin position="75"/>
        <end position="141"/>
    </location>
</feature>
<feature type="region of interest" description="Disordered" evidence="5">
    <location>
        <begin position="1"/>
        <end position="65"/>
    </location>
</feature>
<feature type="compositionally biased region" description="Low complexity" evidence="5">
    <location>
        <begin position="1"/>
        <end position="22"/>
    </location>
</feature>
<organism evidence="9">
    <name type="scientific">Mus musculus</name>
    <name type="common">Mouse</name>
    <dbReference type="NCBI Taxonomy" id="10090"/>
    <lineage>
        <taxon>Eukaryota</taxon>
        <taxon>Metazoa</taxon>
        <taxon>Chordata</taxon>
        <taxon>Craniata</taxon>
        <taxon>Vertebrata</taxon>
        <taxon>Euteleostomi</taxon>
        <taxon>Mammalia</taxon>
        <taxon>Eutheria</taxon>
        <taxon>Euarchontoglires</taxon>
        <taxon>Glires</taxon>
        <taxon>Rodentia</taxon>
        <taxon>Myomorpha</taxon>
        <taxon>Muroidea</taxon>
        <taxon>Muridae</taxon>
        <taxon>Murinae</taxon>
        <taxon>Mus</taxon>
        <taxon>Mus</taxon>
    </lineage>
</organism>